<comment type="function">
    <text evidence="1">Functions in the N-end rule pathway of protein degradation where it conjugates Leu, Phe and, less efficiently, Met from aminoacyl-tRNAs to the N-termini of proteins containing an N-terminal arginine or lysine.</text>
</comment>
<comment type="catalytic activity">
    <reaction evidence="1">
        <text>N-terminal L-lysyl-[protein] + L-leucyl-tRNA(Leu) = N-terminal L-leucyl-L-lysyl-[protein] + tRNA(Leu) + H(+)</text>
        <dbReference type="Rhea" id="RHEA:12340"/>
        <dbReference type="Rhea" id="RHEA-COMP:9613"/>
        <dbReference type="Rhea" id="RHEA-COMP:9622"/>
        <dbReference type="Rhea" id="RHEA-COMP:12670"/>
        <dbReference type="Rhea" id="RHEA-COMP:12671"/>
        <dbReference type="ChEBI" id="CHEBI:15378"/>
        <dbReference type="ChEBI" id="CHEBI:65249"/>
        <dbReference type="ChEBI" id="CHEBI:78442"/>
        <dbReference type="ChEBI" id="CHEBI:78494"/>
        <dbReference type="ChEBI" id="CHEBI:133043"/>
        <dbReference type="EC" id="2.3.2.6"/>
    </reaction>
</comment>
<comment type="catalytic activity">
    <reaction evidence="1">
        <text>N-terminal L-arginyl-[protein] + L-leucyl-tRNA(Leu) = N-terminal L-leucyl-L-arginyl-[protein] + tRNA(Leu) + H(+)</text>
        <dbReference type="Rhea" id="RHEA:50416"/>
        <dbReference type="Rhea" id="RHEA-COMP:9613"/>
        <dbReference type="Rhea" id="RHEA-COMP:9622"/>
        <dbReference type="Rhea" id="RHEA-COMP:12672"/>
        <dbReference type="Rhea" id="RHEA-COMP:12673"/>
        <dbReference type="ChEBI" id="CHEBI:15378"/>
        <dbReference type="ChEBI" id="CHEBI:64719"/>
        <dbReference type="ChEBI" id="CHEBI:78442"/>
        <dbReference type="ChEBI" id="CHEBI:78494"/>
        <dbReference type="ChEBI" id="CHEBI:133044"/>
        <dbReference type="EC" id="2.3.2.6"/>
    </reaction>
</comment>
<comment type="catalytic activity">
    <reaction evidence="1">
        <text>L-phenylalanyl-tRNA(Phe) + an N-terminal L-alpha-aminoacyl-[protein] = an N-terminal L-phenylalanyl-L-alpha-aminoacyl-[protein] + tRNA(Phe)</text>
        <dbReference type="Rhea" id="RHEA:43632"/>
        <dbReference type="Rhea" id="RHEA-COMP:9668"/>
        <dbReference type="Rhea" id="RHEA-COMP:9699"/>
        <dbReference type="Rhea" id="RHEA-COMP:10636"/>
        <dbReference type="Rhea" id="RHEA-COMP:10637"/>
        <dbReference type="ChEBI" id="CHEBI:78442"/>
        <dbReference type="ChEBI" id="CHEBI:78531"/>
        <dbReference type="ChEBI" id="CHEBI:78597"/>
        <dbReference type="ChEBI" id="CHEBI:83561"/>
        <dbReference type="EC" id="2.3.2.6"/>
    </reaction>
</comment>
<comment type="subcellular location">
    <subcellularLocation>
        <location evidence="1">Cytoplasm</location>
    </subcellularLocation>
</comment>
<comment type="similarity">
    <text evidence="1">Belongs to the L/F-transferase family.</text>
</comment>
<name>LFTR_SALRD</name>
<feature type="chain" id="PRO_0000258095" description="Leucyl/phenylalanyl-tRNA--protein transferase">
    <location>
        <begin position="1"/>
        <end position="226"/>
    </location>
</feature>
<gene>
    <name evidence="1" type="primary">aat</name>
    <name type="ordered locus">SRU_0827</name>
</gene>
<sequence length="226" mass="25264">MPDDLTPDLLIRAYANGVFPMGDDDTGIVRWHAPDPRAYLPLDAFHIPHNLRRRVRRREFSVTADRAFASVIEACADRARTWITPRIIRVYTELHERGYAHSVECWQEGDLAGGLYGVGLKGAFFGESMFYRVSNASKVALVHLVRQLRAGGFTLLDTQYSTEHLERFGVTTVPRPAFEQKLIRALDVSPDWWPLADAEAADLDTPVSEFSAAAPTLRGNESPPNG</sequence>
<protein>
    <recommendedName>
        <fullName evidence="1">Leucyl/phenylalanyl-tRNA--protein transferase</fullName>
        <ecNumber evidence="1">2.3.2.6</ecNumber>
    </recommendedName>
    <alternativeName>
        <fullName evidence="1">L/F-transferase</fullName>
    </alternativeName>
    <alternativeName>
        <fullName evidence="1">Leucyltransferase</fullName>
    </alternativeName>
    <alternativeName>
        <fullName evidence="1">Phenyalanyltransferase</fullName>
    </alternativeName>
</protein>
<evidence type="ECO:0000255" key="1">
    <source>
        <dbReference type="HAMAP-Rule" id="MF_00688"/>
    </source>
</evidence>
<reference key="1">
    <citation type="journal article" date="2005" name="Proc. Natl. Acad. Sci. U.S.A.">
        <title>The genome of Salinibacter ruber: convergence and gene exchange among hyperhalophilic bacteria and archaea.</title>
        <authorList>
            <person name="Mongodin E.F."/>
            <person name="Nelson K.E."/>
            <person name="Daugherty S."/>
            <person name="DeBoy R.T."/>
            <person name="Wister J."/>
            <person name="Khouri H."/>
            <person name="Weidman J."/>
            <person name="Walsh D.A."/>
            <person name="Papke R.T."/>
            <person name="Sanchez Perez G."/>
            <person name="Sharma A.K."/>
            <person name="Nesbo C.L."/>
            <person name="MacLeod D."/>
            <person name="Bapteste E."/>
            <person name="Doolittle W.F."/>
            <person name="Charlebois R.L."/>
            <person name="Legault B."/>
            <person name="Rodriguez-Valera F."/>
        </authorList>
    </citation>
    <scope>NUCLEOTIDE SEQUENCE [LARGE SCALE GENOMIC DNA]</scope>
    <source>
        <strain>DSM 13855 / CECT 5946 / M31</strain>
    </source>
</reference>
<accession>Q2S4B9</accession>
<dbReference type="EC" id="2.3.2.6" evidence="1"/>
<dbReference type="EMBL" id="CP000159">
    <property type="protein sequence ID" value="ABC45933.1"/>
    <property type="molecule type" value="Genomic_DNA"/>
</dbReference>
<dbReference type="RefSeq" id="WP_011403591.1">
    <property type="nucleotide sequence ID" value="NC_007677.1"/>
</dbReference>
<dbReference type="RefSeq" id="YP_444962.1">
    <property type="nucleotide sequence ID" value="NC_007677.1"/>
</dbReference>
<dbReference type="SMR" id="Q2S4B9"/>
<dbReference type="STRING" id="309807.SRU_0827"/>
<dbReference type="EnsemblBacteria" id="ABC45933">
    <property type="protein sequence ID" value="ABC45933"/>
    <property type="gene ID" value="SRU_0827"/>
</dbReference>
<dbReference type="KEGG" id="sru:SRU_0827"/>
<dbReference type="PATRIC" id="fig|309807.25.peg.851"/>
<dbReference type="eggNOG" id="COG2360">
    <property type="taxonomic scope" value="Bacteria"/>
</dbReference>
<dbReference type="HOGENOM" id="CLU_075045_1_1_10"/>
<dbReference type="OrthoDB" id="9790282at2"/>
<dbReference type="Proteomes" id="UP000008674">
    <property type="component" value="Chromosome"/>
</dbReference>
<dbReference type="GO" id="GO:0005737">
    <property type="term" value="C:cytoplasm"/>
    <property type="evidence" value="ECO:0007669"/>
    <property type="project" value="UniProtKB-SubCell"/>
</dbReference>
<dbReference type="GO" id="GO:0008914">
    <property type="term" value="F:leucyl-tRNA--protein transferase activity"/>
    <property type="evidence" value="ECO:0007669"/>
    <property type="project" value="UniProtKB-UniRule"/>
</dbReference>
<dbReference type="GO" id="GO:0030163">
    <property type="term" value="P:protein catabolic process"/>
    <property type="evidence" value="ECO:0007669"/>
    <property type="project" value="UniProtKB-UniRule"/>
</dbReference>
<dbReference type="Gene3D" id="3.40.630.70">
    <property type="entry name" value="Leucyl/phenylalanyl-tRNA-protein transferase, C-terminal domain"/>
    <property type="match status" value="1"/>
</dbReference>
<dbReference type="Gene3D" id="3.30.70.3550">
    <property type="entry name" value="Leucyl/phenylalanyl-tRNA-protein transferase, N-terminal domain"/>
    <property type="match status" value="1"/>
</dbReference>
<dbReference type="HAMAP" id="MF_00688">
    <property type="entry name" value="Leu_Phe_trans"/>
    <property type="match status" value="1"/>
</dbReference>
<dbReference type="InterPro" id="IPR016181">
    <property type="entry name" value="Acyl_CoA_acyltransferase"/>
</dbReference>
<dbReference type="InterPro" id="IPR004616">
    <property type="entry name" value="Leu/Phe-tRNA_Trfase"/>
</dbReference>
<dbReference type="InterPro" id="IPR042203">
    <property type="entry name" value="Leu/Phe-tRNA_Trfase_C"/>
</dbReference>
<dbReference type="InterPro" id="IPR042221">
    <property type="entry name" value="Leu/Phe-tRNA_Trfase_N"/>
</dbReference>
<dbReference type="NCBIfam" id="TIGR00667">
    <property type="entry name" value="aat"/>
    <property type="match status" value="1"/>
</dbReference>
<dbReference type="PANTHER" id="PTHR30098">
    <property type="entry name" value="LEUCYL/PHENYLALANYL-TRNA--PROTEIN TRANSFERASE"/>
    <property type="match status" value="1"/>
</dbReference>
<dbReference type="PANTHER" id="PTHR30098:SF2">
    <property type="entry name" value="LEUCYL_PHENYLALANYL-TRNA--PROTEIN TRANSFERASE"/>
    <property type="match status" value="1"/>
</dbReference>
<dbReference type="Pfam" id="PF03588">
    <property type="entry name" value="Leu_Phe_trans"/>
    <property type="match status" value="1"/>
</dbReference>
<dbReference type="SUPFAM" id="SSF55729">
    <property type="entry name" value="Acyl-CoA N-acyltransferases (Nat)"/>
    <property type="match status" value="1"/>
</dbReference>
<organism>
    <name type="scientific">Salinibacter ruber (strain DSM 13855 / M31)</name>
    <dbReference type="NCBI Taxonomy" id="309807"/>
    <lineage>
        <taxon>Bacteria</taxon>
        <taxon>Pseudomonadati</taxon>
        <taxon>Rhodothermota</taxon>
        <taxon>Rhodothermia</taxon>
        <taxon>Rhodothermales</taxon>
        <taxon>Salinibacteraceae</taxon>
        <taxon>Salinibacter</taxon>
    </lineage>
</organism>
<proteinExistence type="inferred from homology"/>
<keyword id="KW-0012">Acyltransferase</keyword>
<keyword id="KW-0963">Cytoplasm</keyword>
<keyword id="KW-1185">Reference proteome</keyword>
<keyword id="KW-0808">Transferase</keyword>